<evidence type="ECO:0000255" key="1">
    <source>
        <dbReference type="HAMAP-Rule" id="MF_00052"/>
    </source>
</evidence>
<evidence type="ECO:0000255" key="2">
    <source>
        <dbReference type="PROSITE-ProRule" id="PRU01319"/>
    </source>
</evidence>
<proteinExistence type="inferred from homology"/>
<protein>
    <recommendedName>
        <fullName evidence="1">Ribonuclease HII</fullName>
        <shortName evidence="1">RNase HII</shortName>
        <ecNumber evidence="1">3.1.26.4</ecNumber>
    </recommendedName>
</protein>
<reference key="1">
    <citation type="submission" date="2006-10" db="EMBL/GenBank/DDBJ databases">
        <title>Complete sequence of Methanosaeta thermophila PT.</title>
        <authorList>
            <consortium name="US DOE Joint Genome Institute"/>
            <person name="Copeland A."/>
            <person name="Lucas S."/>
            <person name="Lapidus A."/>
            <person name="Barry K."/>
            <person name="Detter J.C."/>
            <person name="Glavina del Rio T."/>
            <person name="Hammon N."/>
            <person name="Israni S."/>
            <person name="Pitluck S."/>
            <person name="Chain P."/>
            <person name="Malfatti S."/>
            <person name="Shin M."/>
            <person name="Vergez L."/>
            <person name="Schmutz J."/>
            <person name="Larimer F."/>
            <person name="Land M."/>
            <person name="Hauser L."/>
            <person name="Kyrpides N."/>
            <person name="Kim E."/>
            <person name="Smith K.S."/>
            <person name="Ingram-Smith C."/>
            <person name="Richardson P."/>
        </authorList>
    </citation>
    <scope>NUCLEOTIDE SEQUENCE [LARGE SCALE GENOMIC DNA]</scope>
    <source>
        <strain>DSM 6194 / JCM 14653 / NBRC 101360 / PT</strain>
    </source>
</reference>
<organism>
    <name type="scientific">Methanothrix thermoacetophila (strain DSM 6194 / JCM 14653 / NBRC 101360 / PT)</name>
    <name type="common">Methanosaeta thermophila</name>
    <dbReference type="NCBI Taxonomy" id="349307"/>
    <lineage>
        <taxon>Archaea</taxon>
        <taxon>Methanobacteriati</taxon>
        <taxon>Methanobacteriota</taxon>
        <taxon>Stenosarchaea group</taxon>
        <taxon>Methanomicrobia</taxon>
        <taxon>Methanotrichales</taxon>
        <taxon>Methanotrichaceae</taxon>
        <taxon>Methanothrix</taxon>
    </lineage>
</organism>
<gene>
    <name evidence="1" type="primary">rnhB</name>
    <name type="ordered locus">Mthe_0780</name>
</gene>
<name>RNH2_METTP</name>
<keyword id="KW-0963">Cytoplasm</keyword>
<keyword id="KW-0255">Endonuclease</keyword>
<keyword id="KW-0378">Hydrolase</keyword>
<keyword id="KW-0464">Manganese</keyword>
<keyword id="KW-0479">Metal-binding</keyword>
<keyword id="KW-0540">Nuclease</keyword>
<keyword id="KW-1185">Reference proteome</keyword>
<comment type="function">
    <text evidence="1">Endonuclease that specifically degrades the RNA of RNA-DNA hybrids.</text>
</comment>
<comment type="catalytic activity">
    <reaction evidence="1">
        <text>Endonucleolytic cleavage to 5'-phosphomonoester.</text>
        <dbReference type="EC" id="3.1.26.4"/>
    </reaction>
</comment>
<comment type="cofactor">
    <cofactor evidence="1">
        <name>Mn(2+)</name>
        <dbReference type="ChEBI" id="CHEBI:29035"/>
    </cofactor>
    <cofactor evidence="1">
        <name>Mg(2+)</name>
        <dbReference type="ChEBI" id="CHEBI:18420"/>
    </cofactor>
    <text evidence="1">Manganese or magnesium. Binds 1 divalent metal ion per monomer in the absence of substrate. May bind a second metal ion after substrate binding.</text>
</comment>
<comment type="subcellular location">
    <subcellularLocation>
        <location evidence="1">Cytoplasm</location>
    </subcellularLocation>
</comment>
<comment type="similarity">
    <text evidence="1">Belongs to the RNase HII family.</text>
</comment>
<feature type="chain" id="PRO_0000334984" description="Ribonuclease HII">
    <location>
        <begin position="1"/>
        <end position="211"/>
    </location>
</feature>
<feature type="domain" description="RNase H type-2" evidence="2">
    <location>
        <begin position="2"/>
        <end position="211"/>
    </location>
</feature>
<feature type="binding site" evidence="1">
    <location>
        <position position="8"/>
    </location>
    <ligand>
        <name>a divalent metal cation</name>
        <dbReference type="ChEBI" id="CHEBI:60240"/>
    </ligand>
</feature>
<feature type="binding site" evidence="1">
    <location>
        <position position="9"/>
    </location>
    <ligand>
        <name>a divalent metal cation</name>
        <dbReference type="ChEBI" id="CHEBI:60240"/>
    </ligand>
</feature>
<feature type="binding site" evidence="1">
    <location>
        <position position="106"/>
    </location>
    <ligand>
        <name>a divalent metal cation</name>
        <dbReference type="ChEBI" id="CHEBI:60240"/>
    </ligand>
</feature>
<accession>A0B796</accession>
<sequence length="211" mass="23247">MMLILGVDEAGKGPVIGSMFVAGVVFSEEDIFDLAACGVKDSKLLSPTRRESMERKILSIARESFVLEVTAQQIDDLRMVMSMNEIMVRAHSRVVSRLQADRAILDAADVNAERFAQRVREVSGKPIDILAEHNADRKHIVVAAASIIAKVARDRSIRDLEAALGRPLGSGYPSDPATVRFLKEWIEENGDLPSFVRKSWSTAQRLKASSV</sequence>
<dbReference type="EC" id="3.1.26.4" evidence="1"/>
<dbReference type="EMBL" id="CP000477">
    <property type="protein sequence ID" value="ABK14570.1"/>
    <property type="molecule type" value="Genomic_DNA"/>
</dbReference>
<dbReference type="RefSeq" id="WP_011695966.1">
    <property type="nucleotide sequence ID" value="NC_008553.1"/>
</dbReference>
<dbReference type="SMR" id="A0B796"/>
<dbReference type="STRING" id="349307.Mthe_0780"/>
<dbReference type="GeneID" id="4462420"/>
<dbReference type="KEGG" id="mtp:Mthe_0780"/>
<dbReference type="HOGENOM" id="CLU_036532_0_4_2"/>
<dbReference type="OrthoDB" id="33866at2157"/>
<dbReference type="Proteomes" id="UP000000674">
    <property type="component" value="Chromosome"/>
</dbReference>
<dbReference type="GO" id="GO:0005737">
    <property type="term" value="C:cytoplasm"/>
    <property type="evidence" value="ECO:0007669"/>
    <property type="project" value="UniProtKB-SubCell"/>
</dbReference>
<dbReference type="GO" id="GO:0032299">
    <property type="term" value="C:ribonuclease H2 complex"/>
    <property type="evidence" value="ECO:0007669"/>
    <property type="project" value="TreeGrafter"/>
</dbReference>
<dbReference type="GO" id="GO:0030145">
    <property type="term" value="F:manganese ion binding"/>
    <property type="evidence" value="ECO:0007669"/>
    <property type="project" value="UniProtKB-UniRule"/>
</dbReference>
<dbReference type="GO" id="GO:0003723">
    <property type="term" value="F:RNA binding"/>
    <property type="evidence" value="ECO:0007669"/>
    <property type="project" value="InterPro"/>
</dbReference>
<dbReference type="GO" id="GO:0004523">
    <property type="term" value="F:RNA-DNA hybrid ribonuclease activity"/>
    <property type="evidence" value="ECO:0007669"/>
    <property type="project" value="UniProtKB-UniRule"/>
</dbReference>
<dbReference type="GO" id="GO:0043137">
    <property type="term" value="P:DNA replication, removal of RNA primer"/>
    <property type="evidence" value="ECO:0007669"/>
    <property type="project" value="TreeGrafter"/>
</dbReference>
<dbReference type="GO" id="GO:0006298">
    <property type="term" value="P:mismatch repair"/>
    <property type="evidence" value="ECO:0007669"/>
    <property type="project" value="TreeGrafter"/>
</dbReference>
<dbReference type="CDD" id="cd07180">
    <property type="entry name" value="RNase_HII_archaea_like"/>
    <property type="match status" value="1"/>
</dbReference>
<dbReference type="FunFam" id="1.10.10.460:FF:000001">
    <property type="entry name" value="Ribonuclease"/>
    <property type="match status" value="1"/>
</dbReference>
<dbReference type="Gene3D" id="3.30.420.10">
    <property type="entry name" value="Ribonuclease H-like superfamily/Ribonuclease H"/>
    <property type="match status" value="1"/>
</dbReference>
<dbReference type="Gene3D" id="1.10.10.460">
    <property type="entry name" value="Ribonuclease hii. Domain 2"/>
    <property type="match status" value="1"/>
</dbReference>
<dbReference type="HAMAP" id="MF_00052_A">
    <property type="entry name" value="RNase_HII_A"/>
    <property type="match status" value="1"/>
</dbReference>
<dbReference type="InterPro" id="IPR004649">
    <property type="entry name" value="RNase_H2_suA"/>
</dbReference>
<dbReference type="InterPro" id="IPR001352">
    <property type="entry name" value="RNase_HII/HIII"/>
</dbReference>
<dbReference type="InterPro" id="IPR024567">
    <property type="entry name" value="RNase_HII/HIII_dom"/>
</dbReference>
<dbReference type="InterPro" id="IPR020787">
    <property type="entry name" value="RNase_HII_arc"/>
</dbReference>
<dbReference type="InterPro" id="IPR023160">
    <property type="entry name" value="RNase_HII_hlx-loop-hlx_cap_dom"/>
</dbReference>
<dbReference type="InterPro" id="IPR012337">
    <property type="entry name" value="RNaseH-like_sf"/>
</dbReference>
<dbReference type="InterPro" id="IPR036397">
    <property type="entry name" value="RNaseH_sf"/>
</dbReference>
<dbReference type="NCBIfam" id="TIGR00729">
    <property type="entry name" value="ribonuclease HII"/>
    <property type="match status" value="1"/>
</dbReference>
<dbReference type="PANTHER" id="PTHR10954:SF23">
    <property type="entry name" value="RIBONUCLEASE"/>
    <property type="match status" value="1"/>
</dbReference>
<dbReference type="PANTHER" id="PTHR10954">
    <property type="entry name" value="RIBONUCLEASE H2 SUBUNIT A"/>
    <property type="match status" value="1"/>
</dbReference>
<dbReference type="Pfam" id="PF01351">
    <property type="entry name" value="RNase_HII"/>
    <property type="match status" value="1"/>
</dbReference>
<dbReference type="SUPFAM" id="SSF53098">
    <property type="entry name" value="Ribonuclease H-like"/>
    <property type="match status" value="1"/>
</dbReference>
<dbReference type="PROSITE" id="PS51975">
    <property type="entry name" value="RNASE_H_2"/>
    <property type="match status" value="1"/>
</dbReference>